<accession>C0ZL15</accession>
<name>GCSH_BREBN</name>
<dbReference type="EMBL" id="AP008955">
    <property type="protein sequence ID" value="BAH45842.1"/>
    <property type="molecule type" value="Genomic_DNA"/>
</dbReference>
<dbReference type="RefSeq" id="WP_007726364.1">
    <property type="nucleotide sequence ID" value="NC_012491.1"/>
</dbReference>
<dbReference type="SMR" id="C0ZL15"/>
<dbReference type="STRING" id="358681.BBR47_48650"/>
<dbReference type="KEGG" id="bbe:BBR47_48650"/>
<dbReference type="eggNOG" id="COG0509">
    <property type="taxonomic scope" value="Bacteria"/>
</dbReference>
<dbReference type="HOGENOM" id="CLU_097408_2_2_9"/>
<dbReference type="Proteomes" id="UP000001877">
    <property type="component" value="Chromosome"/>
</dbReference>
<dbReference type="GO" id="GO:0005829">
    <property type="term" value="C:cytosol"/>
    <property type="evidence" value="ECO:0007669"/>
    <property type="project" value="TreeGrafter"/>
</dbReference>
<dbReference type="GO" id="GO:0005960">
    <property type="term" value="C:glycine cleavage complex"/>
    <property type="evidence" value="ECO:0007669"/>
    <property type="project" value="InterPro"/>
</dbReference>
<dbReference type="GO" id="GO:0019464">
    <property type="term" value="P:glycine decarboxylation via glycine cleavage system"/>
    <property type="evidence" value="ECO:0007669"/>
    <property type="project" value="UniProtKB-UniRule"/>
</dbReference>
<dbReference type="CDD" id="cd06848">
    <property type="entry name" value="GCS_H"/>
    <property type="match status" value="1"/>
</dbReference>
<dbReference type="Gene3D" id="2.40.50.100">
    <property type="match status" value="1"/>
</dbReference>
<dbReference type="HAMAP" id="MF_00272">
    <property type="entry name" value="GcvH"/>
    <property type="match status" value="1"/>
</dbReference>
<dbReference type="InterPro" id="IPR003016">
    <property type="entry name" value="2-oxoA_DH_lipoyl-BS"/>
</dbReference>
<dbReference type="InterPro" id="IPR000089">
    <property type="entry name" value="Biotin_lipoyl"/>
</dbReference>
<dbReference type="InterPro" id="IPR002930">
    <property type="entry name" value="GCV_H"/>
</dbReference>
<dbReference type="InterPro" id="IPR033753">
    <property type="entry name" value="GCV_H/Fam206"/>
</dbReference>
<dbReference type="InterPro" id="IPR017453">
    <property type="entry name" value="GCV_H_sub"/>
</dbReference>
<dbReference type="InterPro" id="IPR011053">
    <property type="entry name" value="Single_hybrid_motif"/>
</dbReference>
<dbReference type="NCBIfam" id="TIGR00527">
    <property type="entry name" value="gcvH"/>
    <property type="match status" value="1"/>
</dbReference>
<dbReference type="NCBIfam" id="NF002270">
    <property type="entry name" value="PRK01202.1"/>
    <property type="match status" value="1"/>
</dbReference>
<dbReference type="PANTHER" id="PTHR11715">
    <property type="entry name" value="GLYCINE CLEAVAGE SYSTEM H PROTEIN"/>
    <property type="match status" value="1"/>
</dbReference>
<dbReference type="PANTHER" id="PTHR11715:SF3">
    <property type="entry name" value="GLYCINE CLEAVAGE SYSTEM H PROTEIN-RELATED"/>
    <property type="match status" value="1"/>
</dbReference>
<dbReference type="Pfam" id="PF01597">
    <property type="entry name" value="GCV_H"/>
    <property type="match status" value="1"/>
</dbReference>
<dbReference type="SUPFAM" id="SSF51230">
    <property type="entry name" value="Single hybrid motif"/>
    <property type="match status" value="1"/>
</dbReference>
<dbReference type="PROSITE" id="PS50968">
    <property type="entry name" value="BIOTINYL_LIPOYL"/>
    <property type="match status" value="1"/>
</dbReference>
<dbReference type="PROSITE" id="PS00189">
    <property type="entry name" value="LIPOYL"/>
    <property type="match status" value="1"/>
</dbReference>
<proteinExistence type="inferred from homology"/>
<protein>
    <recommendedName>
        <fullName evidence="1">Glycine cleavage system H protein</fullName>
    </recommendedName>
    <alternativeName>
        <fullName evidence="1">Octanoyl/lipoyl carrier protein</fullName>
    </alternativeName>
</protein>
<comment type="function">
    <text evidence="1">The glycine cleavage system catalyzes the degradation of glycine. The H protein shuttles the methylamine group of glycine from the P protein to the T protein.</text>
</comment>
<comment type="function">
    <text evidence="1">Is also involved in protein lipoylation via its role as an octanoyl/lipoyl carrier protein intermediate.</text>
</comment>
<comment type="cofactor">
    <cofactor evidence="1">
        <name>(R)-lipoate</name>
        <dbReference type="ChEBI" id="CHEBI:83088"/>
    </cofactor>
    <text evidence="1">Binds 1 lipoyl cofactor covalently.</text>
</comment>
<comment type="subunit">
    <text evidence="1">The glycine cleavage system is composed of four proteins: P, T, L and H.</text>
</comment>
<comment type="similarity">
    <text evidence="1">Belongs to the GcvH family.</text>
</comment>
<organism>
    <name type="scientific">Brevibacillus brevis (strain 47 / JCM 6285 / NBRC 100599)</name>
    <dbReference type="NCBI Taxonomy" id="358681"/>
    <lineage>
        <taxon>Bacteria</taxon>
        <taxon>Bacillati</taxon>
        <taxon>Bacillota</taxon>
        <taxon>Bacilli</taxon>
        <taxon>Bacillales</taxon>
        <taxon>Paenibacillaceae</taxon>
        <taxon>Brevibacillus</taxon>
    </lineage>
</organism>
<feature type="chain" id="PRO_1000190193" description="Glycine cleavage system H protein">
    <location>
        <begin position="1"/>
        <end position="126"/>
    </location>
</feature>
<feature type="domain" description="Lipoyl-binding" evidence="2">
    <location>
        <begin position="22"/>
        <end position="104"/>
    </location>
</feature>
<feature type="modified residue" description="N6-lipoyllysine" evidence="1">
    <location>
        <position position="63"/>
    </location>
</feature>
<sequence length="126" mass="14089">MEFPKNLRYSEEHEWVRVEGNKAYIGITSFAQAELGDIVFVELPEVGATIQQDEPFGSVESVKTVSELYAPVTGKVVEVNGELEDAPELVNSSPYEQAWMIVVELSDTAELDKLMDADKYEAMVKE</sequence>
<keyword id="KW-0450">Lipoyl</keyword>
<keyword id="KW-1185">Reference proteome</keyword>
<gene>
    <name evidence="1" type="primary">gcvH</name>
    <name type="ordered locus">BBR47_48650</name>
</gene>
<reference key="1">
    <citation type="submission" date="2005-03" db="EMBL/GenBank/DDBJ databases">
        <title>Brevibacillus brevis strain 47, complete genome.</title>
        <authorList>
            <person name="Hosoyama A."/>
            <person name="Yamada R."/>
            <person name="Hongo Y."/>
            <person name="Terui Y."/>
            <person name="Ankai A."/>
            <person name="Masuyama W."/>
            <person name="Sekiguchi M."/>
            <person name="Takeda T."/>
            <person name="Asano K."/>
            <person name="Ohji S."/>
            <person name="Ichikawa N."/>
            <person name="Narita S."/>
            <person name="Aoki N."/>
            <person name="Miura H."/>
            <person name="Matsushita S."/>
            <person name="Sekigawa T."/>
            <person name="Yamagata H."/>
            <person name="Yoshikawa H."/>
            <person name="Udaka S."/>
            <person name="Tanikawa S."/>
            <person name="Fujita N."/>
        </authorList>
    </citation>
    <scope>NUCLEOTIDE SEQUENCE [LARGE SCALE GENOMIC DNA]</scope>
    <source>
        <strain>47 / JCM 6285 / NBRC 100599</strain>
    </source>
</reference>
<evidence type="ECO:0000255" key="1">
    <source>
        <dbReference type="HAMAP-Rule" id="MF_00272"/>
    </source>
</evidence>
<evidence type="ECO:0000255" key="2">
    <source>
        <dbReference type="PROSITE-ProRule" id="PRU01066"/>
    </source>
</evidence>